<gene>
    <name evidence="1" type="primary">trpC</name>
    <name type="ordered locus">BPUM_1997</name>
</gene>
<keyword id="KW-0028">Amino-acid biosynthesis</keyword>
<keyword id="KW-0057">Aromatic amino acid biosynthesis</keyword>
<keyword id="KW-0210">Decarboxylase</keyword>
<keyword id="KW-0456">Lyase</keyword>
<keyword id="KW-0822">Tryptophan biosynthesis</keyword>
<dbReference type="EC" id="4.1.1.48" evidence="1"/>
<dbReference type="EMBL" id="CP000813">
    <property type="protein sequence ID" value="ABV62667.1"/>
    <property type="molecule type" value="Genomic_DNA"/>
</dbReference>
<dbReference type="RefSeq" id="WP_012010378.1">
    <property type="nucleotide sequence ID" value="NZ_VEIS01000015.1"/>
</dbReference>
<dbReference type="SMR" id="A8FEK0"/>
<dbReference type="STRING" id="315750.BPUM_1997"/>
<dbReference type="GeneID" id="5621263"/>
<dbReference type="KEGG" id="bpu:BPUM_1997"/>
<dbReference type="eggNOG" id="COG0134">
    <property type="taxonomic scope" value="Bacteria"/>
</dbReference>
<dbReference type="HOGENOM" id="CLU_034247_2_0_9"/>
<dbReference type="OrthoDB" id="9804217at2"/>
<dbReference type="UniPathway" id="UPA00035">
    <property type="reaction ID" value="UER00043"/>
</dbReference>
<dbReference type="Proteomes" id="UP000001355">
    <property type="component" value="Chromosome"/>
</dbReference>
<dbReference type="GO" id="GO:0004425">
    <property type="term" value="F:indole-3-glycerol-phosphate synthase activity"/>
    <property type="evidence" value="ECO:0007669"/>
    <property type="project" value="UniProtKB-UniRule"/>
</dbReference>
<dbReference type="GO" id="GO:0004640">
    <property type="term" value="F:phosphoribosylanthranilate isomerase activity"/>
    <property type="evidence" value="ECO:0007669"/>
    <property type="project" value="TreeGrafter"/>
</dbReference>
<dbReference type="GO" id="GO:0000162">
    <property type="term" value="P:L-tryptophan biosynthetic process"/>
    <property type="evidence" value="ECO:0007669"/>
    <property type="project" value="UniProtKB-UniRule"/>
</dbReference>
<dbReference type="CDD" id="cd00331">
    <property type="entry name" value="IGPS"/>
    <property type="match status" value="1"/>
</dbReference>
<dbReference type="FunFam" id="3.20.20.70:FF:000024">
    <property type="entry name" value="Indole-3-glycerol phosphate synthase"/>
    <property type="match status" value="1"/>
</dbReference>
<dbReference type="Gene3D" id="3.20.20.70">
    <property type="entry name" value="Aldolase class I"/>
    <property type="match status" value="1"/>
</dbReference>
<dbReference type="HAMAP" id="MF_00134_B">
    <property type="entry name" value="IGPS_B"/>
    <property type="match status" value="1"/>
</dbReference>
<dbReference type="InterPro" id="IPR013785">
    <property type="entry name" value="Aldolase_TIM"/>
</dbReference>
<dbReference type="InterPro" id="IPR045186">
    <property type="entry name" value="Indole-3-glycerol_P_synth"/>
</dbReference>
<dbReference type="InterPro" id="IPR013798">
    <property type="entry name" value="Indole-3-glycerol_P_synth_dom"/>
</dbReference>
<dbReference type="InterPro" id="IPR001468">
    <property type="entry name" value="Indole-3-GlycerolPSynthase_CS"/>
</dbReference>
<dbReference type="InterPro" id="IPR011060">
    <property type="entry name" value="RibuloseP-bd_barrel"/>
</dbReference>
<dbReference type="NCBIfam" id="NF001375">
    <property type="entry name" value="PRK00278.2-2"/>
    <property type="match status" value="1"/>
</dbReference>
<dbReference type="NCBIfam" id="NF001377">
    <property type="entry name" value="PRK00278.2-4"/>
    <property type="match status" value="1"/>
</dbReference>
<dbReference type="PANTHER" id="PTHR22854:SF2">
    <property type="entry name" value="INDOLE-3-GLYCEROL-PHOSPHATE SYNTHASE"/>
    <property type="match status" value="1"/>
</dbReference>
<dbReference type="PANTHER" id="PTHR22854">
    <property type="entry name" value="TRYPTOPHAN BIOSYNTHESIS PROTEIN"/>
    <property type="match status" value="1"/>
</dbReference>
<dbReference type="Pfam" id="PF00218">
    <property type="entry name" value="IGPS"/>
    <property type="match status" value="1"/>
</dbReference>
<dbReference type="SUPFAM" id="SSF51366">
    <property type="entry name" value="Ribulose-phoshate binding barrel"/>
    <property type="match status" value="1"/>
</dbReference>
<dbReference type="PROSITE" id="PS00614">
    <property type="entry name" value="IGPS"/>
    <property type="match status" value="1"/>
</dbReference>
<name>TRPC_BACP2</name>
<comment type="catalytic activity">
    <reaction evidence="1">
        <text>1-(2-carboxyphenylamino)-1-deoxy-D-ribulose 5-phosphate + H(+) = (1S,2R)-1-C-(indol-3-yl)glycerol 3-phosphate + CO2 + H2O</text>
        <dbReference type="Rhea" id="RHEA:23476"/>
        <dbReference type="ChEBI" id="CHEBI:15377"/>
        <dbReference type="ChEBI" id="CHEBI:15378"/>
        <dbReference type="ChEBI" id="CHEBI:16526"/>
        <dbReference type="ChEBI" id="CHEBI:58613"/>
        <dbReference type="ChEBI" id="CHEBI:58866"/>
        <dbReference type="EC" id="4.1.1.48"/>
    </reaction>
</comment>
<comment type="pathway">
    <text evidence="1">Amino-acid biosynthesis; L-tryptophan biosynthesis; L-tryptophan from chorismate: step 4/5.</text>
</comment>
<comment type="similarity">
    <text evidence="1">Belongs to the TrpC family.</text>
</comment>
<proteinExistence type="inferred from homology"/>
<evidence type="ECO:0000255" key="1">
    <source>
        <dbReference type="HAMAP-Rule" id="MF_00134"/>
    </source>
</evidence>
<accession>A8FEK0</accession>
<feature type="chain" id="PRO_1000057871" description="Indole-3-glycerol phosphate synthase">
    <location>
        <begin position="1"/>
        <end position="250"/>
    </location>
</feature>
<organism>
    <name type="scientific">Bacillus pumilus (strain SAFR-032)</name>
    <dbReference type="NCBI Taxonomy" id="315750"/>
    <lineage>
        <taxon>Bacteria</taxon>
        <taxon>Bacillati</taxon>
        <taxon>Bacillota</taxon>
        <taxon>Bacilli</taxon>
        <taxon>Bacillales</taxon>
        <taxon>Bacillaceae</taxon>
        <taxon>Bacillus</taxon>
    </lineage>
</organism>
<reference key="1">
    <citation type="journal article" date="2007" name="PLoS ONE">
        <title>Paradoxical DNA repair and peroxide resistance gene conservation in Bacillus pumilus SAFR-032.</title>
        <authorList>
            <person name="Gioia J."/>
            <person name="Yerrapragada S."/>
            <person name="Qin X."/>
            <person name="Jiang H."/>
            <person name="Igboeli O.C."/>
            <person name="Muzny D."/>
            <person name="Dugan-Rocha S."/>
            <person name="Ding Y."/>
            <person name="Hawes A."/>
            <person name="Liu W."/>
            <person name="Perez L."/>
            <person name="Kovar C."/>
            <person name="Dinh H."/>
            <person name="Lee S."/>
            <person name="Nazareth L."/>
            <person name="Blyth P."/>
            <person name="Holder M."/>
            <person name="Buhay C."/>
            <person name="Tirumalai M.R."/>
            <person name="Liu Y."/>
            <person name="Dasgupta I."/>
            <person name="Bokhetache L."/>
            <person name="Fujita M."/>
            <person name="Karouia F."/>
            <person name="Eswara Moorthy P."/>
            <person name="Siefert J."/>
            <person name="Uzman A."/>
            <person name="Buzumbo P."/>
            <person name="Verma A."/>
            <person name="Zwiya H."/>
            <person name="McWilliams B.D."/>
            <person name="Olowu A."/>
            <person name="Clinkenbeard K.D."/>
            <person name="Newcombe D."/>
            <person name="Golebiewski L."/>
            <person name="Petrosino J.F."/>
            <person name="Nicholson W.L."/>
            <person name="Fox G.E."/>
            <person name="Venkateswaran K."/>
            <person name="Highlander S.K."/>
            <person name="Weinstock G.M."/>
        </authorList>
    </citation>
    <scope>NUCLEOTIDE SEQUENCE [LARGE SCALE GENOMIC DNA]</scope>
    <source>
        <strain>SAFR-032</strain>
    </source>
</reference>
<protein>
    <recommendedName>
        <fullName evidence="1">Indole-3-glycerol phosphate synthase</fullName>
        <shortName evidence="1">IGPS</shortName>
        <ecNumber evidence="1">4.1.1.48</ecNumber>
    </recommendedName>
</protein>
<sequence>MLNQIIARKKEHIQTLQLPDDGHFERRSFKEALVNTHRSIGLIAEVKKASPSKGIIQPNFDPLQTAKAYEKSNADCLSVLTDEPFFQGKNEYLSLIKKHIARPILRKDFIIDSIQIEESRRIGADAILLIGEVLEPQQLHELYIEAKEKGLDILVEVHAAETLEQILNLFTPEIIGVNNRNLKTFNTTVEQTKEIAPLVPKDCLLVSESGIQTFDDLTFVKKHGASAVLVGESLMREPSQEKAVQTLFGE</sequence>